<proteinExistence type="inferred from homology"/>
<feature type="chain" id="PRO_0000299204" description="Phosphoprotein">
    <location>
        <begin position="1"/>
        <end position="220"/>
    </location>
</feature>
<dbReference type="EMBL" id="AF147498">
    <property type="protein sequence ID" value="AAD56767.1"/>
    <property type="molecule type" value="Genomic_RNA"/>
</dbReference>
<dbReference type="RefSeq" id="NP_050581.1">
    <property type="nucleotide sequence ID" value="NC_000903.1"/>
</dbReference>
<dbReference type="GeneID" id="1457770"/>
<dbReference type="KEGG" id="vg:1457770"/>
<dbReference type="OrthoDB" id="35641at10239"/>
<dbReference type="Proteomes" id="UP000007219">
    <property type="component" value="Genome"/>
</dbReference>
<dbReference type="GO" id="GO:0030430">
    <property type="term" value="C:host cell cytoplasm"/>
    <property type="evidence" value="ECO:0007669"/>
    <property type="project" value="UniProtKB-SubCell"/>
</dbReference>
<dbReference type="GO" id="GO:0044423">
    <property type="term" value="C:virion component"/>
    <property type="evidence" value="ECO:0007669"/>
    <property type="project" value="UniProtKB-KW"/>
</dbReference>
<dbReference type="InterPro" id="IPR005010">
    <property type="entry name" value="Rhabdo_M1"/>
</dbReference>
<dbReference type="Pfam" id="PF03342">
    <property type="entry name" value="Rhabdo_M1"/>
    <property type="match status" value="1"/>
</dbReference>
<protein>
    <recommendedName>
        <fullName>Phosphoprotein</fullName>
        <shortName>Protein P</shortName>
    </recommendedName>
    <alternativeName>
        <fullName>Protein M1</fullName>
    </alternativeName>
</protein>
<keyword id="KW-0143">Chaperone</keyword>
<keyword id="KW-1035">Host cytoplasm</keyword>
<keyword id="KW-0597">Phosphoprotein</keyword>
<keyword id="KW-1185">Reference proteome</keyword>
<keyword id="KW-0693">Viral RNA replication</keyword>
<keyword id="KW-0946">Virion</keyword>
<comment type="function">
    <text evidence="1">Non catalytic polymerase cofactor and regulatory protein that plays a role in viral transcription and replication. Stabilizes the RNA polymerase L to the N-RNA template and binds the soluble protein N, preventing it from encapsidating non-genomic RNA (By similarity).</text>
</comment>
<comment type="subunit">
    <text evidence="1">Homotrimer when phosphorylated. This trimer is stabilized by binding to the L protein. Binds soluble protein N, and ribonucleocapsid (By similarity).</text>
</comment>
<comment type="subcellular location">
    <subcellularLocation>
        <location>Virion</location>
    </subcellularLocation>
    <subcellularLocation>
        <location evidence="1">Host cytoplasm</location>
    </subcellularLocation>
</comment>
<comment type="PTM">
    <text evidence="1">Phosphorylated by host kinases.</text>
</comment>
<gene>
    <name type="primary">P</name>
</gene>
<evidence type="ECO:0000250" key="1"/>
<sequence>MAESIEMGEELVSSPSTLLALKGKLENPSPDDATILGILGKKTPTVKMEKGKGKGDPIEAFLLEFVDERRQVEANKRLRQYIRQLKMSHQEELTAHLERASAENRANLKSMMESQAESNKTTKTILATLITLRDHVIEEGSKKPRGLDKDQIKLERALGFERGYSSAIAIVNQLKVTEPSQVCKPSVRAAALSAMEKGEFESSGEVFKAVVKRAKAELTK</sequence>
<accession>Q9QJT8</accession>
<name>PHOSP_SHRV</name>
<reference key="1">
    <citation type="submission" date="1999-05" db="EMBL/GenBank/DDBJ databases">
        <title>The complete genomic sequence of snakehead rhabdovirus.</title>
        <authorList>
            <person name="Johnson M.C."/>
            <person name="Bell R.H."/>
            <person name="Leong J.C."/>
        </authorList>
    </citation>
    <scope>NUCLEOTIDE SEQUENCE [GENOMIC RNA]</scope>
</reference>
<organism>
    <name type="scientific">Snakehead rhabdovirus</name>
    <name type="common">SHRV</name>
    <dbReference type="NCBI Taxonomy" id="103603"/>
    <lineage>
        <taxon>Viruses</taxon>
        <taxon>Riboviria</taxon>
        <taxon>Orthornavirae</taxon>
        <taxon>Negarnaviricota</taxon>
        <taxon>Haploviricotina</taxon>
        <taxon>Monjiviricetes</taxon>
        <taxon>Mononegavirales</taxon>
        <taxon>Rhabdoviridae</taxon>
        <taxon>Gammarhabdovirinae</taxon>
        <taxon>Novirhabdovirus</taxon>
        <taxon>Novirhabdovirus snakehead</taxon>
    </lineage>
</organism>
<organismHost>
    <name type="scientific">Gobiosoma bosc</name>
    <name type="common">Naked goby</name>
    <name type="synonym">Gobius bosc</name>
    <dbReference type="NCBI Taxonomy" id="203314"/>
</organismHost>